<organism>
    <name type="scientific">Rickettsia felis (strain ATCC VR-1525 / URRWXCal2)</name>
    <name type="common">Rickettsia azadi</name>
    <dbReference type="NCBI Taxonomy" id="315456"/>
    <lineage>
        <taxon>Bacteria</taxon>
        <taxon>Pseudomonadati</taxon>
        <taxon>Pseudomonadota</taxon>
        <taxon>Alphaproteobacteria</taxon>
        <taxon>Rickettsiales</taxon>
        <taxon>Rickettsiaceae</taxon>
        <taxon>Rickettsieae</taxon>
        <taxon>Rickettsia</taxon>
        <taxon>spotted fever group</taxon>
    </lineage>
</organism>
<dbReference type="EC" id="3.6.5.3" evidence="2"/>
<dbReference type="EMBL" id="AF502185">
    <property type="protein sequence ID" value="AAM90942.1"/>
    <property type="molecule type" value="Genomic_DNA"/>
</dbReference>
<dbReference type="EMBL" id="CP000053">
    <property type="protein sequence ID" value="AAY61127.1"/>
    <property type="molecule type" value="Genomic_DNA"/>
</dbReference>
<dbReference type="SMR" id="Q8KT97"/>
<dbReference type="STRING" id="315456.RF_0276"/>
<dbReference type="KEGG" id="rfe:RF_0276"/>
<dbReference type="eggNOG" id="COG0050">
    <property type="taxonomic scope" value="Bacteria"/>
</dbReference>
<dbReference type="HOGENOM" id="CLU_007265_0_0_5"/>
<dbReference type="OrthoDB" id="9803139at2"/>
<dbReference type="Proteomes" id="UP000008548">
    <property type="component" value="Chromosome"/>
</dbReference>
<dbReference type="GO" id="GO:0005737">
    <property type="term" value="C:cytoplasm"/>
    <property type="evidence" value="ECO:0007669"/>
    <property type="project" value="UniProtKB-SubCell"/>
</dbReference>
<dbReference type="GO" id="GO:0005525">
    <property type="term" value="F:GTP binding"/>
    <property type="evidence" value="ECO:0007669"/>
    <property type="project" value="UniProtKB-UniRule"/>
</dbReference>
<dbReference type="GO" id="GO:0003924">
    <property type="term" value="F:GTPase activity"/>
    <property type="evidence" value="ECO:0007669"/>
    <property type="project" value="InterPro"/>
</dbReference>
<dbReference type="GO" id="GO:0097216">
    <property type="term" value="F:guanosine tetraphosphate binding"/>
    <property type="evidence" value="ECO:0007669"/>
    <property type="project" value="UniProtKB-ARBA"/>
</dbReference>
<dbReference type="GO" id="GO:0003746">
    <property type="term" value="F:translation elongation factor activity"/>
    <property type="evidence" value="ECO:0007669"/>
    <property type="project" value="UniProtKB-UniRule"/>
</dbReference>
<dbReference type="CDD" id="cd01884">
    <property type="entry name" value="EF_Tu"/>
    <property type="match status" value="1"/>
</dbReference>
<dbReference type="CDD" id="cd03697">
    <property type="entry name" value="EFTU_II"/>
    <property type="match status" value="1"/>
</dbReference>
<dbReference type="CDD" id="cd03707">
    <property type="entry name" value="EFTU_III"/>
    <property type="match status" value="1"/>
</dbReference>
<dbReference type="FunFam" id="2.40.30.10:FF:000001">
    <property type="entry name" value="Elongation factor Tu"/>
    <property type="match status" value="1"/>
</dbReference>
<dbReference type="FunFam" id="3.40.50.300:FF:000003">
    <property type="entry name" value="Elongation factor Tu"/>
    <property type="match status" value="1"/>
</dbReference>
<dbReference type="Gene3D" id="3.40.50.300">
    <property type="entry name" value="P-loop containing nucleotide triphosphate hydrolases"/>
    <property type="match status" value="1"/>
</dbReference>
<dbReference type="Gene3D" id="2.40.30.10">
    <property type="entry name" value="Translation factors"/>
    <property type="match status" value="2"/>
</dbReference>
<dbReference type="HAMAP" id="MF_00118_B">
    <property type="entry name" value="EF_Tu_B"/>
    <property type="match status" value="1"/>
</dbReference>
<dbReference type="InterPro" id="IPR041709">
    <property type="entry name" value="EF-Tu_GTP-bd"/>
</dbReference>
<dbReference type="InterPro" id="IPR050055">
    <property type="entry name" value="EF-Tu_GTPase"/>
</dbReference>
<dbReference type="InterPro" id="IPR004161">
    <property type="entry name" value="EFTu-like_2"/>
</dbReference>
<dbReference type="InterPro" id="IPR033720">
    <property type="entry name" value="EFTU_2"/>
</dbReference>
<dbReference type="InterPro" id="IPR031157">
    <property type="entry name" value="G_TR_CS"/>
</dbReference>
<dbReference type="InterPro" id="IPR027417">
    <property type="entry name" value="P-loop_NTPase"/>
</dbReference>
<dbReference type="InterPro" id="IPR005225">
    <property type="entry name" value="Small_GTP-bd"/>
</dbReference>
<dbReference type="InterPro" id="IPR000795">
    <property type="entry name" value="T_Tr_GTP-bd_dom"/>
</dbReference>
<dbReference type="InterPro" id="IPR009000">
    <property type="entry name" value="Transl_B-barrel_sf"/>
</dbReference>
<dbReference type="InterPro" id="IPR009001">
    <property type="entry name" value="Transl_elong_EF1A/Init_IF2_C"/>
</dbReference>
<dbReference type="InterPro" id="IPR004541">
    <property type="entry name" value="Transl_elong_EFTu/EF1A_bac/org"/>
</dbReference>
<dbReference type="InterPro" id="IPR004160">
    <property type="entry name" value="Transl_elong_EFTu/EF1A_C"/>
</dbReference>
<dbReference type="NCBIfam" id="TIGR00485">
    <property type="entry name" value="EF-Tu"/>
    <property type="match status" value="1"/>
</dbReference>
<dbReference type="NCBIfam" id="NF000766">
    <property type="entry name" value="PRK00049.1"/>
    <property type="match status" value="1"/>
</dbReference>
<dbReference type="NCBIfam" id="NF009372">
    <property type="entry name" value="PRK12735.1"/>
    <property type="match status" value="1"/>
</dbReference>
<dbReference type="NCBIfam" id="NF009373">
    <property type="entry name" value="PRK12736.1"/>
    <property type="match status" value="1"/>
</dbReference>
<dbReference type="NCBIfam" id="TIGR00231">
    <property type="entry name" value="small_GTP"/>
    <property type="match status" value="1"/>
</dbReference>
<dbReference type="PANTHER" id="PTHR43721:SF22">
    <property type="entry name" value="ELONGATION FACTOR TU, MITOCHONDRIAL"/>
    <property type="match status" value="1"/>
</dbReference>
<dbReference type="PANTHER" id="PTHR43721">
    <property type="entry name" value="ELONGATION FACTOR TU-RELATED"/>
    <property type="match status" value="1"/>
</dbReference>
<dbReference type="Pfam" id="PF00009">
    <property type="entry name" value="GTP_EFTU"/>
    <property type="match status" value="1"/>
</dbReference>
<dbReference type="Pfam" id="PF03144">
    <property type="entry name" value="GTP_EFTU_D2"/>
    <property type="match status" value="1"/>
</dbReference>
<dbReference type="Pfam" id="PF03143">
    <property type="entry name" value="GTP_EFTU_D3"/>
    <property type="match status" value="1"/>
</dbReference>
<dbReference type="PRINTS" id="PR00315">
    <property type="entry name" value="ELONGATNFCT"/>
</dbReference>
<dbReference type="SUPFAM" id="SSF50465">
    <property type="entry name" value="EF-Tu/eEF-1alpha/eIF2-gamma C-terminal domain"/>
    <property type="match status" value="1"/>
</dbReference>
<dbReference type="SUPFAM" id="SSF52540">
    <property type="entry name" value="P-loop containing nucleoside triphosphate hydrolases"/>
    <property type="match status" value="1"/>
</dbReference>
<dbReference type="SUPFAM" id="SSF50447">
    <property type="entry name" value="Translation proteins"/>
    <property type="match status" value="1"/>
</dbReference>
<dbReference type="PROSITE" id="PS00301">
    <property type="entry name" value="G_TR_1"/>
    <property type="match status" value="1"/>
</dbReference>
<dbReference type="PROSITE" id="PS51722">
    <property type="entry name" value="G_TR_2"/>
    <property type="match status" value="1"/>
</dbReference>
<accession>Q8KT97</accession>
<accession>Q4UMT1</accession>
<comment type="function">
    <text evidence="2">GTP hydrolase that promotes the GTP-dependent binding of aminoacyl-tRNA to the A-site of ribosomes during protein biosynthesis.</text>
</comment>
<comment type="catalytic activity">
    <reaction evidence="2">
        <text>GTP + H2O = GDP + phosphate + H(+)</text>
        <dbReference type="Rhea" id="RHEA:19669"/>
        <dbReference type="ChEBI" id="CHEBI:15377"/>
        <dbReference type="ChEBI" id="CHEBI:15378"/>
        <dbReference type="ChEBI" id="CHEBI:37565"/>
        <dbReference type="ChEBI" id="CHEBI:43474"/>
        <dbReference type="ChEBI" id="CHEBI:58189"/>
        <dbReference type="EC" id="3.6.5.3"/>
    </reaction>
    <physiologicalReaction direction="left-to-right" evidence="2">
        <dbReference type="Rhea" id="RHEA:19670"/>
    </physiologicalReaction>
</comment>
<comment type="subunit">
    <text evidence="2">Monomer.</text>
</comment>
<comment type="subcellular location">
    <subcellularLocation>
        <location evidence="2">Cytoplasm</location>
    </subcellularLocation>
</comment>
<comment type="similarity">
    <text evidence="2">Belongs to the TRAFAC class translation factor GTPase superfamily. Classic translation factor GTPase family. EF-Tu/EF-1A subfamily.</text>
</comment>
<evidence type="ECO:0000250" key="1"/>
<evidence type="ECO:0000255" key="2">
    <source>
        <dbReference type="HAMAP-Rule" id="MF_00118"/>
    </source>
</evidence>
<keyword id="KW-0963">Cytoplasm</keyword>
<keyword id="KW-0251">Elongation factor</keyword>
<keyword id="KW-0342">GTP-binding</keyword>
<keyword id="KW-0378">Hydrolase</keyword>
<keyword id="KW-0460">Magnesium</keyword>
<keyword id="KW-0479">Metal-binding</keyword>
<keyword id="KW-0547">Nucleotide-binding</keyword>
<keyword id="KW-0648">Protein biosynthesis</keyword>
<name>EFTU_RICFE</name>
<protein>
    <recommendedName>
        <fullName evidence="2">Elongation factor Tu</fullName>
        <shortName evidence="2">EF-Tu</shortName>
        <ecNumber evidence="2">3.6.5.3</ecNumber>
    </recommendedName>
</protein>
<gene>
    <name evidence="2" type="primary">tuf</name>
    <name type="ordered locus">RF_0276</name>
</gene>
<proteinExistence type="inferred from homology"/>
<reference key="1">
    <citation type="journal article" date="2002" name="Mol. Biol. Evol.">
        <title>Proliferation and deterioration of Rickettsia palindromic elements.</title>
        <authorList>
            <person name="Amiri H."/>
            <person name="Alsmark C.M."/>
            <person name="Andersson S.G.E."/>
        </authorList>
    </citation>
    <scope>NUCLEOTIDE SEQUENCE [GENOMIC DNA]</scope>
</reference>
<reference key="2">
    <citation type="journal article" date="2005" name="PLoS Biol.">
        <title>The genome sequence of Rickettsia felis identifies the first putative conjugative plasmid in an obligate intracellular parasite.</title>
        <authorList>
            <person name="Ogata H."/>
            <person name="Renesto P."/>
            <person name="Audic S."/>
            <person name="Robert C."/>
            <person name="Blanc G."/>
            <person name="Fournier P.-E."/>
            <person name="Parinello H."/>
            <person name="Claverie J.-M."/>
            <person name="Raoult D."/>
        </authorList>
    </citation>
    <scope>NUCLEOTIDE SEQUENCE [LARGE SCALE GENOMIC DNA]</scope>
    <source>
        <strain>ATCC VR-1525 / URRWXCal2</strain>
    </source>
</reference>
<feature type="chain" id="PRO_0000091374" description="Elongation factor Tu">
    <location>
        <begin position="1"/>
        <end position="394"/>
    </location>
</feature>
<feature type="domain" description="tr-type G">
    <location>
        <begin position="10"/>
        <end position="204"/>
    </location>
</feature>
<feature type="region of interest" description="G1" evidence="1">
    <location>
        <begin position="19"/>
        <end position="26"/>
    </location>
</feature>
<feature type="region of interest" description="G2" evidence="1">
    <location>
        <begin position="60"/>
        <end position="64"/>
    </location>
</feature>
<feature type="region of interest" description="G3" evidence="1">
    <location>
        <begin position="81"/>
        <end position="84"/>
    </location>
</feature>
<feature type="region of interest" description="G4" evidence="1">
    <location>
        <begin position="136"/>
        <end position="139"/>
    </location>
</feature>
<feature type="region of interest" description="G5" evidence="1">
    <location>
        <begin position="174"/>
        <end position="176"/>
    </location>
</feature>
<feature type="binding site" evidence="2">
    <location>
        <begin position="19"/>
        <end position="26"/>
    </location>
    <ligand>
        <name>GTP</name>
        <dbReference type="ChEBI" id="CHEBI:37565"/>
    </ligand>
</feature>
<feature type="binding site" evidence="2">
    <location>
        <position position="26"/>
    </location>
    <ligand>
        <name>Mg(2+)</name>
        <dbReference type="ChEBI" id="CHEBI:18420"/>
    </ligand>
</feature>
<feature type="binding site" evidence="2">
    <location>
        <begin position="81"/>
        <end position="85"/>
    </location>
    <ligand>
        <name>GTP</name>
        <dbReference type="ChEBI" id="CHEBI:37565"/>
    </ligand>
</feature>
<feature type="binding site" evidence="2">
    <location>
        <begin position="136"/>
        <end position="139"/>
    </location>
    <ligand>
        <name>GTP</name>
        <dbReference type="ChEBI" id="CHEBI:37565"/>
    </ligand>
</feature>
<sequence length="394" mass="42894">MAKAKFERTKPHVNIGTIGHVDHGKTSLTAAITIVLAKTGGAKATAYDQIDAAPEEKERGITISTAHVEYETKNRHYAHVDCPGHADYVKNMITGAAQMDGAILVVSAADGPMPQTREHILLAKQVGVPAMVVFLNKVDMVDDPDLLELVEMEVRELLSKYGFPGDEIPIIKGSALQALEGKPEGEKAINELMDAVDSYIPQPVRATDKLFLMPIEDVFSISGRGTVVTGRVESGIIKLGEEIEIVGLKDTQKTTCTGVEMFRKLLDEGQAGDNVGILLRGTKREEVERGQVLAKPGSIKPHDKFEAEVYVLSKEEGGRHTPFTNDYRPQFYFRTTDVTGTIKLPADKQMVMPGDNATFTVELIKPIAMQEGLKFSIREGGRTVGAGVVTKINN</sequence>